<keyword id="KW-0067">ATP-binding</keyword>
<keyword id="KW-0436">Ligase</keyword>
<keyword id="KW-0460">Magnesium</keyword>
<keyword id="KW-0479">Metal-binding</keyword>
<keyword id="KW-0520">NAD</keyword>
<keyword id="KW-0547">Nucleotide-binding</keyword>
<comment type="function">
    <text evidence="1">Catalyzes the ATP-dependent amidation of deamido-NAD to form NAD. Uses ammonia as a nitrogen source.</text>
</comment>
<comment type="catalytic activity">
    <reaction evidence="1">
        <text>deamido-NAD(+) + NH4(+) + ATP = AMP + diphosphate + NAD(+) + H(+)</text>
        <dbReference type="Rhea" id="RHEA:21188"/>
        <dbReference type="ChEBI" id="CHEBI:15378"/>
        <dbReference type="ChEBI" id="CHEBI:28938"/>
        <dbReference type="ChEBI" id="CHEBI:30616"/>
        <dbReference type="ChEBI" id="CHEBI:33019"/>
        <dbReference type="ChEBI" id="CHEBI:57540"/>
        <dbReference type="ChEBI" id="CHEBI:58437"/>
        <dbReference type="ChEBI" id="CHEBI:456215"/>
        <dbReference type="EC" id="6.3.1.5"/>
    </reaction>
</comment>
<comment type="pathway">
    <text evidence="1">Cofactor biosynthesis; NAD(+) biosynthesis; NAD(+) from deamido-NAD(+) (ammonia route): step 1/1.</text>
</comment>
<comment type="subunit">
    <text evidence="1">Homodimer.</text>
</comment>
<comment type="similarity">
    <text evidence="1">Belongs to the NAD synthetase family.</text>
</comment>
<reference key="1">
    <citation type="journal article" date="2004" name="Nat. Biotechnol.">
        <title>The genome sequence of the capnophilic rumen bacterium Mannheimia succiniciproducens.</title>
        <authorList>
            <person name="Hong S.H."/>
            <person name="Kim J.S."/>
            <person name="Lee S.Y."/>
            <person name="In Y.H."/>
            <person name="Choi S.S."/>
            <person name="Rih J.-K."/>
            <person name="Kim C.H."/>
            <person name="Jeong H."/>
            <person name="Hur C.G."/>
            <person name="Kim J.J."/>
        </authorList>
    </citation>
    <scope>NUCLEOTIDE SEQUENCE [LARGE SCALE GENOMIC DNA]</scope>
    <source>
        <strain>KCTC 0769BP / MBEL55E</strain>
    </source>
</reference>
<name>NADE_MANSM</name>
<accession>Q65RB5</accession>
<dbReference type="EC" id="6.3.1.5" evidence="1"/>
<dbReference type="EMBL" id="AE016827">
    <property type="protein sequence ID" value="AAU38495.1"/>
    <property type="molecule type" value="Genomic_DNA"/>
</dbReference>
<dbReference type="RefSeq" id="WP_011201048.1">
    <property type="nucleotide sequence ID" value="NC_006300.1"/>
</dbReference>
<dbReference type="SMR" id="Q65RB5"/>
<dbReference type="STRING" id="221988.MS1888"/>
<dbReference type="KEGG" id="msu:MS1888"/>
<dbReference type="eggNOG" id="COG0171">
    <property type="taxonomic scope" value="Bacteria"/>
</dbReference>
<dbReference type="HOGENOM" id="CLU_059327_1_1_6"/>
<dbReference type="OrthoDB" id="9760188at2"/>
<dbReference type="UniPathway" id="UPA00253">
    <property type="reaction ID" value="UER00333"/>
</dbReference>
<dbReference type="Proteomes" id="UP000000607">
    <property type="component" value="Chromosome"/>
</dbReference>
<dbReference type="GO" id="GO:0005737">
    <property type="term" value="C:cytoplasm"/>
    <property type="evidence" value="ECO:0007669"/>
    <property type="project" value="InterPro"/>
</dbReference>
<dbReference type="GO" id="GO:0005524">
    <property type="term" value="F:ATP binding"/>
    <property type="evidence" value="ECO:0007669"/>
    <property type="project" value="UniProtKB-UniRule"/>
</dbReference>
<dbReference type="GO" id="GO:0004359">
    <property type="term" value="F:glutaminase activity"/>
    <property type="evidence" value="ECO:0007669"/>
    <property type="project" value="InterPro"/>
</dbReference>
<dbReference type="GO" id="GO:0046872">
    <property type="term" value="F:metal ion binding"/>
    <property type="evidence" value="ECO:0007669"/>
    <property type="project" value="UniProtKB-KW"/>
</dbReference>
<dbReference type="GO" id="GO:0003952">
    <property type="term" value="F:NAD+ synthase (glutamine-hydrolyzing) activity"/>
    <property type="evidence" value="ECO:0007669"/>
    <property type="project" value="InterPro"/>
</dbReference>
<dbReference type="GO" id="GO:0008795">
    <property type="term" value="F:NAD+ synthase activity"/>
    <property type="evidence" value="ECO:0007669"/>
    <property type="project" value="UniProtKB-UniRule"/>
</dbReference>
<dbReference type="GO" id="GO:0009435">
    <property type="term" value="P:NAD biosynthetic process"/>
    <property type="evidence" value="ECO:0007669"/>
    <property type="project" value="UniProtKB-UniRule"/>
</dbReference>
<dbReference type="CDD" id="cd00553">
    <property type="entry name" value="NAD_synthase"/>
    <property type="match status" value="1"/>
</dbReference>
<dbReference type="Gene3D" id="3.40.50.620">
    <property type="entry name" value="HUPs"/>
    <property type="match status" value="1"/>
</dbReference>
<dbReference type="HAMAP" id="MF_00193">
    <property type="entry name" value="NadE_ammonia_dep"/>
    <property type="match status" value="1"/>
</dbReference>
<dbReference type="InterPro" id="IPR022310">
    <property type="entry name" value="NAD/GMP_synthase"/>
</dbReference>
<dbReference type="InterPro" id="IPR003694">
    <property type="entry name" value="NAD_synthase"/>
</dbReference>
<dbReference type="InterPro" id="IPR022926">
    <property type="entry name" value="NH(3)-dep_NAD(+)_synth"/>
</dbReference>
<dbReference type="InterPro" id="IPR014729">
    <property type="entry name" value="Rossmann-like_a/b/a_fold"/>
</dbReference>
<dbReference type="NCBIfam" id="TIGR00552">
    <property type="entry name" value="nadE"/>
    <property type="match status" value="1"/>
</dbReference>
<dbReference type="PANTHER" id="PTHR23090">
    <property type="entry name" value="NH 3 /GLUTAMINE-DEPENDENT NAD + SYNTHETASE"/>
    <property type="match status" value="1"/>
</dbReference>
<dbReference type="PANTHER" id="PTHR23090:SF7">
    <property type="entry name" value="NH(3)-DEPENDENT NAD(+) SYNTHETASE"/>
    <property type="match status" value="1"/>
</dbReference>
<dbReference type="Pfam" id="PF02540">
    <property type="entry name" value="NAD_synthase"/>
    <property type="match status" value="1"/>
</dbReference>
<dbReference type="SUPFAM" id="SSF52402">
    <property type="entry name" value="Adenine nucleotide alpha hydrolases-like"/>
    <property type="match status" value="1"/>
</dbReference>
<organism>
    <name type="scientific">Mannheimia succiniciproducens (strain KCTC 0769BP / MBEL55E)</name>
    <dbReference type="NCBI Taxonomy" id="221988"/>
    <lineage>
        <taxon>Bacteria</taxon>
        <taxon>Pseudomonadati</taxon>
        <taxon>Pseudomonadota</taxon>
        <taxon>Gammaproteobacteria</taxon>
        <taxon>Pasteurellales</taxon>
        <taxon>Pasteurellaceae</taxon>
        <taxon>Basfia</taxon>
    </lineage>
</organism>
<proteinExistence type="inferred from homology"/>
<sequence>MKTAAYADYLIQWLENQRTELYGMDGYTLGVSGGIDSAVCAHLAARTGAPVQALILPAEVTSPSDVADAQATLESAGIDGQIISIAPWYDLIMQQLSPVLNSEPERVNVLKGNLMARLRMIALFTTAQSHRSIVLGTDNAAEWLTGYFTKFGDGAADVLPLAGLRKEQVFELGRYLGVPQSVLDKKPSAGLWAGQTDEAEMGVTYAEIDAYLRGETVSPQALQQIRFWHNRSHHKRMLPPKPKSPDEAEC</sequence>
<feature type="chain" id="PRO_1000077573" description="NH(3)-dependent NAD(+) synthetase">
    <location>
        <begin position="1"/>
        <end position="250"/>
    </location>
</feature>
<feature type="binding site" evidence="1">
    <location>
        <begin position="30"/>
        <end position="37"/>
    </location>
    <ligand>
        <name>ATP</name>
        <dbReference type="ChEBI" id="CHEBI:30616"/>
    </ligand>
</feature>
<feature type="binding site" evidence="1">
    <location>
        <position position="36"/>
    </location>
    <ligand>
        <name>Mg(2+)</name>
        <dbReference type="ChEBI" id="CHEBI:18420"/>
    </ligand>
</feature>
<feature type="binding site" evidence="1">
    <location>
        <position position="117"/>
    </location>
    <ligand>
        <name>deamido-NAD(+)</name>
        <dbReference type="ChEBI" id="CHEBI:58437"/>
    </ligand>
</feature>
<feature type="binding site" evidence="1">
    <location>
        <position position="137"/>
    </location>
    <ligand>
        <name>ATP</name>
        <dbReference type="ChEBI" id="CHEBI:30616"/>
    </ligand>
</feature>
<feature type="binding site" evidence="1">
    <location>
        <position position="142"/>
    </location>
    <ligand>
        <name>Mg(2+)</name>
        <dbReference type="ChEBI" id="CHEBI:18420"/>
    </ligand>
</feature>
<feature type="binding site" evidence="1">
    <location>
        <position position="150"/>
    </location>
    <ligand>
        <name>deamido-NAD(+)</name>
        <dbReference type="ChEBI" id="CHEBI:58437"/>
    </ligand>
</feature>
<feature type="binding site" evidence="1">
    <location>
        <position position="157"/>
    </location>
    <ligand>
        <name>deamido-NAD(+)</name>
        <dbReference type="ChEBI" id="CHEBI:58437"/>
    </ligand>
</feature>
<feature type="binding site" evidence="1">
    <location>
        <position position="166"/>
    </location>
    <ligand>
        <name>ATP</name>
        <dbReference type="ChEBI" id="CHEBI:30616"/>
    </ligand>
</feature>
<feature type="binding site" evidence="1">
    <location>
        <position position="188"/>
    </location>
    <ligand>
        <name>ATP</name>
        <dbReference type="ChEBI" id="CHEBI:30616"/>
    </ligand>
</feature>
<feature type="binding site" evidence="1">
    <location>
        <begin position="234"/>
        <end position="235"/>
    </location>
    <ligand>
        <name>deamido-NAD(+)</name>
        <dbReference type="ChEBI" id="CHEBI:58437"/>
    </ligand>
</feature>
<gene>
    <name evidence="1" type="primary">nadE</name>
    <name type="ordered locus">MS1888</name>
</gene>
<evidence type="ECO:0000255" key="1">
    <source>
        <dbReference type="HAMAP-Rule" id="MF_00193"/>
    </source>
</evidence>
<protein>
    <recommendedName>
        <fullName evidence="1">NH(3)-dependent NAD(+) synthetase</fullName>
        <ecNumber evidence="1">6.3.1.5</ecNumber>
    </recommendedName>
</protein>